<gene>
    <name evidence="1" type="primary">rbcL</name>
</gene>
<protein>
    <recommendedName>
        <fullName evidence="1">Ribulose bisphosphate carboxylase large chain</fullName>
        <shortName evidence="1">RuBisCO large subunit</shortName>
        <ecNumber evidence="1">4.1.1.39</ecNumber>
    </recommendedName>
</protein>
<reference key="1">
    <citation type="journal article" date="1993" name="Ann. Mo. Bot. Gard.">
        <title>Phylogenetic relationships of Cornus L. sensu lato and putative relatives inferred from rbcL sequence data.</title>
        <authorList>
            <person name="Xiang Q.-Y."/>
            <person name="Soltis D.E."/>
            <person name="Morgan D.R."/>
            <person name="Soltis P.S."/>
        </authorList>
        <dbReference type="AGRICOLA" id="IND93053817"/>
    </citation>
    <scope>NUCLEOTIDE SEQUENCE [GENOMIC DNA]</scope>
    <source>
        <tissue>Leaf</tissue>
    </source>
</reference>
<dbReference type="EC" id="4.1.1.39" evidence="1"/>
<dbReference type="EMBL" id="L11215">
    <property type="protein sequence ID" value="AAA84164.2"/>
    <property type="molecule type" value="Genomic_DNA"/>
</dbReference>
<dbReference type="SMR" id="Q31983"/>
<dbReference type="GO" id="GO:0009507">
    <property type="term" value="C:chloroplast"/>
    <property type="evidence" value="ECO:0007669"/>
    <property type="project" value="UniProtKB-SubCell"/>
</dbReference>
<dbReference type="GO" id="GO:0000287">
    <property type="term" value="F:magnesium ion binding"/>
    <property type="evidence" value="ECO:0007669"/>
    <property type="project" value="InterPro"/>
</dbReference>
<dbReference type="GO" id="GO:0004497">
    <property type="term" value="F:monooxygenase activity"/>
    <property type="evidence" value="ECO:0007669"/>
    <property type="project" value="UniProtKB-KW"/>
</dbReference>
<dbReference type="GO" id="GO:0016984">
    <property type="term" value="F:ribulose-bisphosphate carboxylase activity"/>
    <property type="evidence" value="ECO:0007669"/>
    <property type="project" value="UniProtKB-EC"/>
</dbReference>
<dbReference type="GO" id="GO:0009853">
    <property type="term" value="P:photorespiration"/>
    <property type="evidence" value="ECO:0007669"/>
    <property type="project" value="UniProtKB-KW"/>
</dbReference>
<dbReference type="GO" id="GO:0019253">
    <property type="term" value="P:reductive pentose-phosphate cycle"/>
    <property type="evidence" value="ECO:0007669"/>
    <property type="project" value="UniProtKB-KW"/>
</dbReference>
<dbReference type="CDD" id="cd08212">
    <property type="entry name" value="RuBisCO_large_I"/>
    <property type="match status" value="1"/>
</dbReference>
<dbReference type="FunFam" id="3.20.20.110:FF:000001">
    <property type="entry name" value="Ribulose bisphosphate carboxylase large chain"/>
    <property type="match status" value="1"/>
</dbReference>
<dbReference type="FunFam" id="3.30.70.150:FF:000001">
    <property type="entry name" value="Ribulose bisphosphate carboxylase large chain"/>
    <property type="match status" value="1"/>
</dbReference>
<dbReference type="Gene3D" id="3.20.20.110">
    <property type="entry name" value="Ribulose bisphosphate carboxylase, large subunit, C-terminal domain"/>
    <property type="match status" value="1"/>
</dbReference>
<dbReference type="Gene3D" id="3.30.70.150">
    <property type="entry name" value="RuBisCO large subunit, N-terminal domain"/>
    <property type="match status" value="1"/>
</dbReference>
<dbReference type="HAMAP" id="MF_01338">
    <property type="entry name" value="RuBisCO_L_type1"/>
    <property type="match status" value="1"/>
</dbReference>
<dbReference type="InterPro" id="IPR033966">
    <property type="entry name" value="RuBisCO"/>
</dbReference>
<dbReference type="InterPro" id="IPR020878">
    <property type="entry name" value="RuBisCo_large_chain_AS"/>
</dbReference>
<dbReference type="InterPro" id="IPR000685">
    <property type="entry name" value="RuBisCO_lsu_C"/>
</dbReference>
<dbReference type="InterPro" id="IPR036376">
    <property type="entry name" value="RuBisCO_lsu_C_sf"/>
</dbReference>
<dbReference type="InterPro" id="IPR017443">
    <property type="entry name" value="RuBisCO_lsu_fd_N"/>
</dbReference>
<dbReference type="InterPro" id="IPR036422">
    <property type="entry name" value="RuBisCO_lsu_N_sf"/>
</dbReference>
<dbReference type="InterPro" id="IPR020888">
    <property type="entry name" value="RuBisCO_lsuI"/>
</dbReference>
<dbReference type="NCBIfam" id="NF003252">
    <property type="entry name" value="PRK04208.1"/>
    <property type="match status" value="1"/>
</dbReference>
<dbReference type="PANTHER" id="PTHR42704">
    <property type="entry name" value="RIBULOSE BISPHOSPHATE CARBOXYLASE"/>
    <property type="match status" value="1"/>
</dbReference>
<dbReference type="PANTHER" id="PTHR42704:SF15">
    <property type="entry name" value="RIBULOSE BISPHOSPHATE CARBOXYLASE LARGE CHAIN"/>
    <property type="match status" value="1"/>
</dbReference>
<dbReference type="Pfam" id="PF00016">
    <property type="entry name" value="RuBisCO_large"/>
    <property type="match status" value="1"/>
</dbReference>
<dbReference type="Pfam" id="PF02788">
    <property type="entry name" value="RuBisCO_large_N"/>
    <property type="match status" value="1"/>
</dbReference>
<dbReference type="SFLD" id="SFLDG01052">
    <property type="entry name" value="RuBisCO"/>
    <property type="match status" value="1"/>
</dbReference>
<dbReference type="SFLD" id="SFLDS00014">
    <property type="entry name" value="RuBisCO"/>
    <property type="match status" value="1"/>
</dbReference>
<dbReference type="SFLD" id="SFLDG00301">
    <property type="entry name" value="RuBisCO-like_proteins"/>
    <property type="match status" value="1"/>
</dbReference>
<dbReference type="SUPFAM" id="SSF51649">
    <property type="entry name" value="RuBisCo, C-terminal domain"/>
    <property type="match status" value="1"/>
</dbReference>
<dbReference type="SUPFAM" id="SSF54966">
    <property type="entry name" value="RuBisCO, large subunit, small (N-terminal) domain"/>
    <property type="match status" value="1"/>
</dbReference>
<dbReference type="PROSITE" id="PS00157">
    <property type="entry name" value="RUBISCO_LARGE"/>
    <property type="match status" value="1"/>
</dbReference>
<name>RBL_CORFO</name>
<organism>
    <name type="scientific">Cornus florida</name>
    <name type="common">Flowering dogwood</name>
    <dbReference type="NCBI Taxonomy" id="4283"/>
    <lineage>
        <taxon>Eukaryota</taxon>
        <taxon>Viridiplantae</taxon>
        <taxon>Streptophyta</taxon>
        <taxon>Embryophyta</taxon>
        <taxon>Tracheophyta</taxon>
        <taxon>Spermatophyta</taxon>
        <taxon>Magnoliopsida</taxon>
        <taxon>eudicotyledons</taxon>
        <taxon>Gunneridae</taxon>
        <taxon>Pentapetalae</taxon>
        <taxon>asterids</taxon>
        <taxon>Cornales</taxon>
        <taxon>Cornaceae</taxon>
        <taxon>Cornus</taxon>
    </lineage>
</organism>
<proteinExistence type="inferred from homology"/>
<geneLocation type="chloroplast"/>
<comment type="function">
    <text evidence="1">RuBisCO catalyzes two reactions: the carboxylation of D-ribulose 1,5-bisphosphate, the primary event in carbon dioxide fixation, as well as the oxidative fragmentation of the pentose substrate in the photorespiration process. Both reactions occur simultaneously and in competition at the same active site.</text>
</comment>
<comment type="catalytic activity">
    <reaction evidence="1">
        <text>2 (2R)-3-phosphoglycerate + 2 H(+) = D-ribulose 1,5-bisphosphate + CO2 + H2O</text>
        <dbReference type="Rhea" id="RHEA:23124"/>
        <dbReference type="ChEBI" id="CHEBI:15377"/>
        <dbReference type="ChEBI" id="CHEBI:15378"/>
        <dbReference type="ChEBI" id="CHEBI:16526"/>
        <dbReference type="ChEBI" id="CHEBI:57870"/>
        <dbReference type="ChEBI" id="CHEBI:58272"/>
        <dbReference type="EC" id="4.1.1.39"/>
    </reaction>
</comment>
<comment type="catalytic activity">
    <reaction evidence="1">
        <text>D-ribulose 1,5-bisphosphate + O2 = 2-phosphoglycolate + (2R)-3-phosphoglycerate + 2 H(+)</text>
        <dbReference type="Rhea" id="RHEA:36631"/>
        <dbReference type="ChEBI" id="CHEBI:15378"/>
        <dbReference type="ChEBI" id="CHEBI:15379"/>
        <dbReference type="ChEBI" id="CHEBI:57870"/>
        <dbReference type="ChEBI" id="CHEBI:58033"/>
        <dbReference type="ChEBI" id="CHEBI:58272"/>
    </reaction>
</comment>
<comment type="cofactor">
    <cofactor evidence="1">
        <name>Mg(2+)</name>
        <dbReference type="ChEBI" id="CHEBI:18420"/>
    </cofactor>
    <text evidence="1">Binds 1 Mg(2+) ion per subunit.</text>
</comment>
<comment type="subunit">
    <text evidence="1">Heterohexadecamer of 8 large chains and 8 small chains; disulfide-linked. The disulfide link is formed within the large subunit homodimers.</text>
</comment>
<comment type="subcellular location">
    <subcellularLocation>
        <location>Plastid</location>
        <location>Chloroplast</location>
    </subcellularLocation>
</comment>
<comment type="PTM">
    <text evidence="1">The disulfide bond which can form in the large chain dimeric partners within the hexadecamer appears to be associated with oxidative stress and protein turnover.</text>
</comment>
<comment type="miscellaneous">
    <text evidence="1">The basic functional RuBisCO is composed of a large chain homodimer in a 'head-to-tail' conformation. In form I RuBisCO this homodimer is arranged in a barrel-like tetramer with the small subunits forming a tetrameric 'cap' on each end of the 'barrel'.</text>
</comment>
<comment type="similarity">
    <text evidence="1">Belongs to the RuBisCO large chain family. Type I subfamily.</text>
</comment>
<feature type="chain" id="PRO_0000062418" description="Ribulose bisphosphate carboxylase large chain">
    <location>
        <begin position="1" status="less than"/>
        <end position="465"/>
    </location>
</feature>
<feature type="active site" description="Proton acceptor" evidence="1">
    <location>
        <position position="165"/>
    </location>
</feature>
<feature type="active site" description="Proton acceptor" evidence="1">
    <location>
        <position position="284"/>
    </location>
</feature>
<feature type="binding site" description="in homodimeric partner" evidence="1">
    <location>
        <position position="113"/>
    </location>
    <ligand>
        <name>substrate</name>
    </ligand>
</feature>
<feature type="binding site" evidence="1">
    <location>
        <position position="163"/>
    </location>
    <ligand>
        <name>substrate</name>
    </ligand>
</feature>
<feature type="binding site" evidence="1">
    <location>
        <position position="167"/>
    </location>
    <ligand>
        <name>substrate</name>
    </ligand>
</feature>
<feature type="binding site" description="via carbamate group" evidence="1">
    <location>
        <position position="191"/>
    </location>
    <ligand>
        <name>Mg(2+)</name>
        <dbReference type="ChEBI" id="CHEBI:18420"/>
    </ligand>
</feature>
<feature type="binding site" evidence="1">
    <location>
        <position position="193"/>
    </location>
    <ligand>
        <name>Mg(2+)</name>
        <dbReference type="ChEBI" id="CHEBI:18420"/>
    </ligand>
</feature>
<feature type="binding site" evidence="1">
    <location>
        <position position="194"/>
    </location>
    <ligand>
        <name>Mg(2+)</name>
        <dbReference type="ChEBI" id="CHEBI:18420"/>
    </ligand>
</feature>
<feature type="binding site" evidence="1">
    <location>
        <position position="285"/>
    </location>
    <ligand>
        <name>substrate</name>
    </ligand>
</feature>
<feature type="binding site" evidence="1">
    <location>
        <position position="317"/>
    </location>
    <ligand>
        <name>substrate</name>
    </ligand>
</feature>
<feature type="binding site" evidence="1">
    <location>
        <position position="369"/>
    </location>
    <ligand>
        <name>substrate</name>
    </ligand>
</feature>
<feature type="site" description="Transition state stabilizer" evidence="1">
    <location>
        <position position="324"/>
    </location>
</feature>
<feature type="modified residue" description="N6,N6,N6-trimethyllysine" evidence="1">
    <location>
        <position position="4"/>
    </location>
</feature>
<feature type="modified residue" description="N6-carboxylysine" evidence="1">
    <location>
        <position position="191"/>
    </location>
</feature>
<feature type="disulfide bond" description="Interchain; in linked form" evidence="1">
    <location>
        <position position="237"/>
    </location>
</feature>
<feature type="non-terminal residue">
    <location>
        <position position="1"/>
    </location>
</feature>
<sequence>VGFKAGVKEYKLTYYTPTYETKDTDILAAFRVTPQPGVPPEEAGAAVAAESSTGTWITVWTDGLTSLDRYKGRCYHIEPVAGEESQFIAYVAYPLDLFEEGSVTNMFTSIVGNVFGFKALRALRLEDLRIPVAYVKTFQGPPHGIQVERDKLNKYGRPLLGCTIKPKLGLSAKNYGRAVYECLRGGLDFTKDDENVNSQPFMRWRDRFLFCAEALYKAQAETGEIKGHYLNATAGTCEEMMKRAIFARELGVPIVMHDYLTGGFTANTSLAHYCRDNGLLLHIHRAMHAVIDRQKNHGIHFRVLAKALRMSGGDHIHSGTVVGKLEGEREITLGFVDLLRDDFVEKDRSRGIYFTQDWVSLPGVLPVASGGIHVWHMPALTEIFGDDSVLQFGGGTLGHPWGNAPGAVANRVALEACVQARNEGRDLAREGNEIIREASKWSPELAAACEVWKEIKFEFEAMDTL</sequence>
<evidence type="ECO:0000255" key="1">
    <source>
        <dbReference type="HAMAP-Rule" id="MF_01338"/>
    </source>
</evidence>
<accession>Q31983</accession>
<keyword id="KW-0113">Calvin cycle</keyword>
<keyword id="KW-0120">Carbon dioxide fixation</keyword>
<keyword id="KW-0150">Chloroplast</keyword>
<keyword id="KW-1015">Disulfide bond</keyword>
<keyword id="KW-0456">Lyase</keyword>
<keyword id="KW-0460">Magnesium</keyword>
<keyword id="KW-0479">Metal-binding</keyword>
<keyword id="KW-0488">Methylation</keyword>
<keyword id="KW-0503">Monooxygenase</keyword>
<keyword id="KW-0560">Oxidoreductase</keyword>
<keyword id="KW-0601">Photorespiration</keyword>
<keyword id="KW-0602">Photosynthesis</keyword>
<keyword id="KW-0934">Plastid</keyword>